<proteinExistence type="inferred from homology"/>
<evidence type="ECO:0000255" key="1">
    <source>
        <dbReference type="HAMAP-Rule" id="MF_00202"/>
    </source>
</evidence>
<feature type="chain" id="PRO_1000012167" description="Isopentenyl-diphosphate Delta-isomerase">
    <location>
        <begin position="1"/>
        <end position="181"/>
    </location>
</feature>
<feature type="domain" description="Nudix hydrolase">
    <location>
        <begin position="30"/>
        <end position="164"/>
    </location>
</feature>
<feature type="active site" evidence="1">
    <location>
        <position position="67"/>
    </location>
</feature>
<feature type="active site" evidence="1">
    <location>
        <position position="116"/>
    </location>
</feature>
<feature type="binding site" evidence="1">
    <location>
        <position position="25"/>
    </location>
    <ligand>
        <name>Mn(2+)</name>
        <dbReference type="ChEBI" id="CHEBI:29035"/>
    </ligand>
</feature>
<feature type="binding site" evidence="1">
    <location>
        <position position="32"/>
    </location>
    <ligand>
        <name>Mn(2+)</name>
        <dbReference type="ChEBI" id="CHEBI:29035"/>
    </ligand>
</feature>
<feature type="binding site" evidence="1">
    <location>
        <position position="69"/>
    </location>
    <ligand>
        <name>Mn(2+)</name>
        <dbReference type="ChEBI" id="CHEBI:29035"/>
    </ligand>
</feature>
<feature type="binding site" evidence="1">
    <location>
        <position position="87"/>
    </location>
    <ligand>
        <name>Mg(2+)</name>
        <dbReference type="ChEBI" id="CHEBI:18420"/>
    </ligand>
</feature>
<feature type="binding site" evidence="1">
    <location>
        <position position="114"/>
    </location>
    <ligand>
        <name>Mn(2+)</name>
        <dbReference type="ChEBI" id="CHEBI:29035"/>
    </ligand>
</feature>
<feature type="binding site" evidence="1">
    <location>
        <position position="116"/>
    </location>
    <ligand>
        <name>Mn(2+)</name>
        <dbReference type="ChEBI" id="CHEBI:29035"/>
    </ligand>
</feature>
<comment type="function">
    <text evidence="1">Catalyzes the 1,3-allylic rearrangement of the homoallylic substrate isopentenyl (IPP) to its highly electrophilic allylic isomer, dimethylallyl diphosphate (DMAPP).</text>
</comment>
<comment type="catalytic activity">
    <reaction evidence="1">
        <text>isopentenyl diphosphate = dimethylallyl diphosphate</text>
        <dbReference type="Rhea" id="RHEA:23284"/>
        <dbReference type="ChEBI" id="CHEBI:57623"/>
        <dbReference type="ChEBI" id="CHEBI:128769"/>
        <dbReference type="EC" id="5.3.3.2"/>
    </reaction>
</comment>
<comment type="cofactor">
    <cofactor evidence="1">
        <name>Mg(2+)</name>
        <dbReference type="ChEBI" id="CHEBI:18420"/>
    </cofactor>
    <text evidence="1">Binds 1 Mg(2+) ion per subunit. The magnesium ion binds only when substrate is bound.</text>
</comment>
<comment type="cofactor">
    <cofactor evidence="1">
        <name>Mn(2+)</name>
        <dbReference type="ChEBI" id="CHEBI:29035"/>
    </cofactor>
    <text evidence="1">Binds 1 Mn(2+) ion per subunit.</text>
</comment>
<comment type="pathway">
    <text evidence="1">Isoprenoid biosynthesis; dimethylallyl diphosphate biosynthesis; dimethylallyl diphosphate from isopentenyl diphosphate: step 1/1.</text>
</comment>
<comment type="subunit">
    <text evidence="1">Homodimer.</text>
</comment>
<comment type="subcellular location">
    <subcellularLocation>
        <location evidence="1">Cytoplasm</location>
    </subcellularLocation>
</comment>
<comment type="similarity">
    <text evidence="1">Belongs to the IPP isomerase type 1 family.</text>
</comment>
<protein>
    <recommendedName>
        <fullName evidence="1">Isopentenyl-diphosphate Delta-isomerase</fullName>
        <shortName evidence="1">IPP isomerase</shortName>
        <ecNumber evidence="1">5.3.3.2</ecNumber>
    </recommendedName>
    <alternativeName>
        <fullName evidence="1">IPP:DMAPP isomerase</fullName>
    </alternativeName>
    <alternativeName>
        <fullName evidence="1">Isopentenyl pyrophosphate isomerase</fullName>
    </alternativeName>
</protein>
<gene>
    <name evidence="1" type="primary">idi</name>
    <name type="ordered locus">CKO_04250</name>
</gene>
<accession>A8AP95</accession>
<organism>
    <name type="scientific">Citrobacter koseri (strain ATCC BAA-895 / CDC 4225-83 / SGSC4696)</name>
    <dbReference type="NCBI Taxonomy" id="290338"/>
    <lineage>
        <taxon>Bacteria</taxon>
        <taxon>Pseudomonadati</taxon>
        <taxon>Pseudomonadota</taxon>
        <taxon>Gammaproteobacteria</taxon>
        <taxon>Enterobacterales</taxon>
        <taxon>Enterobacteriaceae</taxon>
        <taxon>Citrobacter</taxon>
    </lineage>
</organism>
<keyword id="KW-0963">Cytoplasm</keyword>
<keyword id="KW-0413">Isomerase</keyword>
<keyword id="KW-0414">Isoprene biosynthesis</keyword>
<keyword id="KW-0460">Magnesium</keyword>
<keyword id="KW-0464">Manganese</keyword>
<keyword id="KW-0479">Metal-binding</keyword>
<keyword id="KW-1185">Reference proteome</keyword>
<reference key="1">
    <citation type="submission" date="2007-08" db="EMBL/GenBank/DDBJ databases">
        <authorList>
            <consortium name="The Citrobacter koseri Genome Sequencing Project"/>
            <person name="McClelland M."/>
            <person name="Sanderson E.K."/>
            <person name="Porwollik S."/>
            <person name="Spieth J."/>
            <person name="Clifton W.S."/>
            <person name="Latreille P."/>
            <person name="Courtney L."/>
            <person name="Wang C."/>
            <person name="Pepin K."/>
            <person name="Bhonagiri V."/>
            <person name="Nash W."/>
            <person name="Johnson M."/>
            <person name="Thiruvilangam P."/>
            <person name="Wilson R."/>
        </authorList>
    </citation>
    <scope>NUCLEOTIDE SEQUENCE [LARGE SCALE GENOMIC DNA]</scope>
    <source>
        <strain>ATCC BAA-895 / CDC 4225-83 / SGSC4696</strain>
    </source>
</reference>
<sequence>MTGEHVILLDEQGNPDGILEKYAAHTSDTLLHLAFSCWLFNAQGQLLVTRRSLSKKAWPGVWTNSVCGHPQQGESTEAAIIRRSRFELGVEITNLTPVYPDFRYRATDPNGIVENEVCPVYAAQVTSALQVNPDEVMDYQWSGLETVLQALSAAPWAFSPWMVLQASDDKARELLREYNQG</sequence>
<name>IDI_CITK8</name>
<dbReference type="EC" id="5.3.3.2" evidence="1"/>
<dbReference type="EMBL" id="CP000822">
    <property type="protein sequence ID" value="ABV15308.1"/>
    <property type="molecule type" value="Genomic_DNA"/>
</dbReference>
<dbReference type="RefSeq" id="WP_012134992.1">
    <property type="nucleotide sequence ID" value="NC_009792.1"/>
</dbReference>
<dbReference type="SMR" id="A8AP95"/>
<dbReference type="STRING" id="290338.CKO_04250"/>
<dbReference type="GeneID" id="45137854"/>
<dbReference type="KEGG" id="cko:CKO_04250"/>
<dbReference type="HOGENOM" id="CLU_060552_2_0_6"/>
<dbReference type="OrthoDB" id="9809458at2"/>
<dbReference type="UniPathway" id="UPA00059">
    <property type="reaction ID" value="UER00104"/>
</dbReference>
<dbReference type="Proteomes" id="UP000008148">
    <property type="component" value="Chromosome"/>
</dbReference>
<dbReference type="GO" id="GO:0005737">
    <property type="term" value="C:cytoplasm"/>
    <property type="evidence" value="ECO:0007669"/>
    <property type="project" value="UniProtKB-SubCell"/>
</dbReference>
<dbReference type="GO" id="GO:0004452">
    <property type="term" value="F:isopentenyl-diphosphate delta-isomerase activity"/>
    <property type="evidence" value="ECO:0007669"/>
    <property type="project" value="UniProtKB-UniRule"/>
</dbReference>
<dbReference type="GO" id="GO:0046872">
    <property type="term" value="F:metal ion binding"/>
    <property type="evidence" value="ECO:0007669"/>
    <property type="project" value="UniProtKB-KW"/>
</dbReference>
<dbReference type="GO" id="GO:0050992">
    <property type="term" value="P:dimethylallyl diphosphate biosynthetic process"/>
    <property type="evidence" value="ECO:0007669"/>
    <property type="project" value="UniProtKB-UniRule"/>
</dbReference>
<dbReference type="GO" id="GO:0008299">
    <property type="term" value="P:isoprenoid biosynthetic process"/>
    <property type="evidence" value="ECO:0007669"/>
    <property type="project" value="UniProtKB-KW"/>
</dbReference>
<dbReference type="CDD" id="cd02885">
    <property type="entry name" value="NUDIX_IPP_Isomerase"/>
    <property type="match status" value="1"/>
</dbReference>
<dbReference type="FunFam" id="3.90.79.10:FF:000009">
    <property type="entry name" value="Isopentenyl-diphosphate Delta-isomerase"/>
    <property type="match status" value="1"/>
</dbReference>
<dbReference type="Gene3D" id="3.90.79.10">
    <property type="entry name" value="Nucleoside Triphosphate Pyrophosphohydrolase"/>
    <property type="match status" value="1"/>
</dbReference>
<dbReference type="HAMAP" id="MF_00202">
    <property type="entry name" value="Idi"/>
    <property type="match status" value="1"/>
</dbReference>
<dbReference type="InterPro" id="IPR056375">
    <property type="entry name" value="Idi_bact"/>
</dbReference>
<dbReference type="InterPro" id="IPR011876">
    <property type="entry name" value="IsopentenylPP_isomerase_typ1"/>
</dbReference>
<dbReference type="InterPro" id="IPR015797">
    <property type="entry name" value="NUDIX_hydrolase-like_dom_sf"/>
</dbReference>
<dbReference type="InterPro" id="IPR000086">
    <property type="entry name" value="NUDIX_hydrolase_dom"/>
</dbReference>
<dbReference type="NCBIfam" id="TIGR02150">
    <property type="entry name" value="IPP_isom_1"/>
    <property type="match status" value="1"/>
</dbReference>
<dbReference type="NCBIfam" id="NF002995">
    <property type="entry name" value="PRK03759.1"/>
    <property type="match status" value="1"/>
</dbReference>
<dbReference type="PANTHER" id="PTHR10885">
    <property type="entry name" value="ISOPENTENYL-DIPHOSPHATE DELTA-ISOMERASE"/>
    <property type="match status" value="1"/>
</dbReference>
<dbReference type="PANTHER" id="PTHR10885:SF0">
    <property type="entry name" value="ISOPENTENYL-DIPHOSPHATE DELTA-ISOMERASE"/>
    <property type="match status" value="1"/>
</dbReference>
<dbReference type="Pfam" id="PF00293">
    <property type="entry name" value="NUDIX"/>
    <property type="match status" value="1"/>
</dbReference>
<dbReference type="PIRSF" id="PIRSF018427">
    <property type="entry name" value="Isopntndiph_ism"/>
    <property type="match status" value="1"/>
</dbReference>
<dbReference type="SUPFAM" id="SSF55811">
    <property type="entry name" value="Nudix"/>
    <property type="match status" value="1"/>
</dbReference>
<dbReference type="PROSITE" id="PS51462">
    <property type="entry name" value="NUDIX"/>
    <property type="match status" value="1"/>
</dbReference>